<sequence length="174" mass="19365">MPKLWDAVAGFAVTFGTLFKKPITEEYPEKPGPVAPRYHGRHQLNRYPDGLEKCIGCELCAWACPADAIYVEGDDNTADERYSPGERYGRVYQINYLRCIGCGLCIEACPTRALTMTNDYEMADDNRADLIWGKDKLLAPLQDGMLAPPHPMAPGATDDDYYLGRIGPATEDVR</sequence>
<reference key="1">
    <citation type="submission" date="2006-12" db="EMBL/GenBank/DDBJ databases">
        <title>Complete sequence of chromosome of Mycobacterium sp. KMS.</title>
        <authorList>
            <consortium name="US DOE Joint Genome Institute"/>
            <person name="Copeland A."/>
            <person name="Lucas S."/>
            <person name="Lapidus A."/>
            <person name="Barry K."/>
            <person name="Detter J.C."/>
            <person name="Glavina del Rio T."/>
            <person name="Hammon N."/>
            <person name="Israni S."/>
            <person name="Dalin E."/>
            <person name="Tice H."/>
            <person name="Pitluck S."/>
            <person name="Kiss H."/>
            <person name="Brettin T."/>
            <person name="Bruce D."/>
            <person name="Han C."/>
            <person name="Tapia R."/>
            <person name="Gilna P."/>
            <person name="Schmutz J."/>
            <person name="Larimer F."/>
            <person name="Land M."/>
            <person name="Hauser L."/>
            <person name="Kyrpides N."/>
            <person name="Mikhailova N."/>
            <person name="Miller C.D."/>
            <person name="Richardson P."/>
        </authorList>
    </citation>
    <scope>NUCLEOTIDE SEQUENCE [LARGE SCALE GENOMIC DNA]</scope>
    <source>
        <strain>KMS</strain>
    </source>
</reference>
<gene>
    <name evidence="1" type="primary">nuoI</name>
    <name type="ordered locus">Mkms_1596</name>
</gene>
<name>NUOI_MYCSK</name>
<evidence type="ECO:0000255" key="1">
    <source>
        <dbReference type="HAMAP-Rule" id="MF_01351"/>
    </source>
</evidence>
<protein>
    <recommendedName>
        <fullName evidence="1">NADH-quinone oxidoreductase subunit I</fullName>
        <ecNumber evidence="1">7.1.1.-</ecNumber>
    </recommendedName>
    <alternativeName>
        <fullName evidence="1">NADH dehydrogenase I subunit I</fullName>
    </alternativeName>
    <alternativeName>
        <fullName evidence="1">NDH-1 subunit I</fullName>
    </alternativeName>
</protein>
<keyword id="KW-0004">4Fe-4S</keyword>
<keyword id="KW-1003">Cell membrane</keyword>
<keyword id="KW-0408">Iron</keyword>
<keyword id="KW-0411">Iron-sulfur</keyword>
<keyword id="KW-0472">Membrane</keyword>
<keyword id="KW-0479">Metal-binding</keyword>
<keyword id="KW-0520">NAD</keyword>
<keyword id="KW-0874">Quinone</keyword>
<keyword id="KW-0677">Repeat</keyword>
<keyword id="KW-1278">Translocase</keyword>
<dbReference type="EC" id="7.1.1.-" evidence="1"/>
<dbReference type="EMBL" id="CP000518">
    <property type="protein sequence ID" value="ABL90804.1"/>
    <property type="molecule type" value="Genomic_DNA"/>
</dbReference>
<dbReference type="SMR" id="A1UD96"/>
<dbReference type="STRING" id="189918.Mkms_1596"/>
<dbReference type="KEGG" id="mkm:Mkms_1596"/>
<dbReference type="HOGENOM" id="CLU_067218_4_0_11"/>
<dbReference type="OrthoDB" id="9808559at2"/>
<dbReference type="GO" id="GO:0005886">
    <property type="term" value="C:plasma membrane"/>
    <property type="evidence" value="ECO:0007669"/>
    <property type="project" value="UniProtKB-SubCell"/>
</dbReference>
<dbReference type="GO" id="GO:0051539">
    <property type="term" value="F:4 iron, 4 sulfur cluster binding"/>
    <property type="evidence" value="ECO:0007669"/>
    <property type="project" value="UniProtKB-KW"/>
</dbReference>
<dbReference type="GO" id="GO:0005506">
    <property type="term" value="F:iron ion binding"/>
    <property type="evidence" value="ECO:0007669"/>
    <property type="project" value="UniProtKB-UniRule"/>
</dbReference>
<dbReference type="GO" id="GO:0050136">
    <property type="term" value="F:NADH:ubiquinone reductase (non-electrogenic) activity"/>
    <property type="evidence" value="ECO:0007669"/>
    <property type="project" value="UniProtKB-UniRule"/>
</dbReference>
<dbReference type="GO" id="GO:0048038">
    <property type="term" value="F:quinone binding"/>
    <property type="evidence" value="ECO:0007669"/>
    <property type="project" value="UniProtKB-KW"/>
</dbReference>
<dbReference type="GO" id="GO:0009060">
    <property type="term" value="P:aerobic respiration"/>
    <property type="evidence" value="ECO:0007669"/>
    <property type="project" value="TreeGrafter"/>
</dbReference>
<dbReference type="FunFam" id="3.30.70.3270:FF:000007">
    <property type="entry name" value="NADH-quinone oxidoreductase subunit I"/>
    <property type="match status" value="1"/>
</dbReference>
<dbReference type="Gene3D" id="3.30.70.3270">
    <property type="match status" value="1"/>
</dbReference>
<dbReference type="HAMAP" id="MF_01351">
    <property type="entry name" value="NDH1_NuoI"/>
    <property type="match status" value="1"/>
</dbReference>
<dbReference type="InterPro" id="IPR017896">
    <property type="entry name" value="4Fe4S_Fe-S-bd"/>
</dbReference>
<dbReference type="InterPro" id="IPR017900">
    <property type="entry name" value="4Fe4S_Fe_S_CS"/>
</dbReference>
<dbReference type="InterPro" id="IPR010226">
    <property type="entry name" value="NADH_quinone_OxRdtase_chainI"/>
</dbReference>
<dbReference type="NCBIfam" id="TIGR01971">
    <property type="entry name" value="NuoI"/>
    <property type="match status" value="1"/>
</dbReference>
<dbReference type="NCBIfam" id="NF004537">
    <property type="entry name" value="PRK05888.1-3"/>
    <property type="match status" value="1"/>
</dbReference>
<dbReference type="PANTHER" id="PTHR10849:SF20">
    <property type="entry name" value="NADH DEHYDROGENASE [UBIQUINONE] IRON-SULFUR PROTEIN 8, MITOCHONDRIAL"/>
    <property type="match status" value="1"/>
</dbReference>
<dbReference type="PANTHER" id="PTHR10849">
    <property type="entry name" value="NADH DEHYDROGENASE UBIQUINONE IRON-SULFUR PROTEIN 8, MITOCHONDRIAL"/>
    <property type="match status" value="1"/>
</dbReference>
<dbReference type="Pfam" id="PF12838">
    <property type="entry name" value="Fer4_7"/>
    <property type="match status" value="1"/>
</dbReference>
<dbReference type="SUPFAM" id="SSF54862">
    <property type="entry name" value="4Fe-4S ferredoxins"/>
    <property type="match status" value="1"/>
</dbReference>
<dbReference type="PROSITE" id="PS00198">
    <property type="entry name" value="4FE4S_FER_1"/>
    <property type="match status" value="2"/>
</dbReference>
<dbReference type="PROSITE" id="PS51379">
    <property type="entry name" value="4FE4S_FER_2"/>
    <property type="match status" value="2"/>
</dbReference>
<organism>
    <name type="scientific">Mycobacterium sp. (strain KMS)</name>
    <dbReference type="NCBI Taxonomy" id="189918"/>
    <lineage>
        <taxon>Bacteria</taxon>
        <taxon>Bacillati</taxon>
        <taxon>Actinomycetota</taxon>
        <taxon>Actinomycetes</taxon>
        <taxon>Mycobacteriales</taxon>
        <taxon>Mycobacteriaceae</taxon>
        <taxon>Mycobacterium</taxon>
    </lineage>
</organism>
<comment type="function">
    <text evidence="1">NDH-1 shuttles electrons from NADH, via FMN and iron-sulfur (Fe-S) centers, to quinones in the respiratory chain. The immediate electron acceptor for the enzyme in this species is believed to be menaquinone. Couples the redox reaction to proton translocation (for every two electrons transferred, four hydrogen ions are translocated across the cytoplasmic membrane), and thus conserves the redox energy in a proton gradient.</text>
</comment>
<comment type="catalytic activity">
    <reaction evidence="1">
        <text>a quinone + NADH + 5 H(+)(in) = a quinol + NAD(+) + 4 H(+)(out)</text>
        <dbReference type="Rhea" id="RHEA:57888"/>
        <dbReference type="ChEBI" id="CHEBI:15378"/>
        <dbReference type="ChEBI" id="CHEBI:24646"/>
        <dbReference type="ChEBI" id="CHEBI:57540"/>
        <dbReference type="ChEBI" id="CHEBI:57945"/>
        <dbReference type="ChEBI" id="CHEBI:132124"/>
    </reaction>
</comment>
<comment type="cofactor">
    <cofactor evidence="1">
        <name>[4Fe-4S] cluster</name>
        <dbReference type="ChEBI" id="CHEBI:49883"/>
    </cofactor>
    <text evidence="1">Binds 2 [4Fe-4S] clusters per subunit.</text>
</comment>
<comment type="subunit">
    <text evidence="1">NDH-1 is composed of 14 different subunits. Subunits NuoA, H, J, K, L, M, N constitute the membrane sector of the complex.</text>
</comment>
<comment type="subcellular location">
    <subcellularLocation>
        <location evidence="1">Cell membrane</location>
        <topology evidence="1">Peripheral membrane protein</topology>
    </subcellularLocation>
</comment>
<comment type="similarity">
    <text evidence="1">Belongs to the complex I 23 kDa subunit family.</text>
</comment>
<proteinExistence type="inferred from homology"/>
<feature type="chain" id="PRO_0000298516" description="NADH-quinone oxidoreductase subunit I">
    <location>
        <begin position="1"/>
        <end position="174"/>
    </location>
</feature>
<feature type="domain" description="4Fe-4S ferredoxin-type 1" evidence="1">
    <location>
        <begin position="44"/>
        <end position="74"/>
    </location>
</feature>
<feature type="domain" description="4Fe-4S ferredoxin-type 2" evidence="1">
    <location>
        <begin position="90"/>
        <end position="119"/>
    </location>
</feature>
<feature type="binding site" evidence="1">
    <location>
        <position position="54"/>
    </location>
    <ligand>
        <name>[4Fe-4S] cluster</name>
        <dbReference type="ChEBI" id="CHEBI:49883"/>
        <label>1</label>
    </ligand>
</feature>
<feature type="binding site" evidence="1">
    <location>
        <position position="57"/>
    </location>
    <ligand>
        <name>[4Fe-4S] cluster</name>
        <dbReference type="ChEBI" id="CHEBI:49883"/>
        <label>1</label>
    </ligand>
</feature>
<feature type="binding site" evidence="1">
    <location>
        <position position="60"/>
    </location>
    <ligand>
        <name>[4Fe-4S] cluster</name>
        <dbReference type="ChEBI" id="CHEBI:49883"/>
        <label>1</label>
    </ligand>
</feature>
<feature type="binding site" evidence="1">
    <location>
        <position position="64"/>
    </location>
    <ligand>
        <name>[4Fe-4S] cluster</name>
        <dbReference type="ChEBI" id="CHEBI:49883"/>
        <label>2</label>
    </ligand>
</feature>
<feature type="binding site" evidence="1">
    <location>
        <position position="99"/>
    </location>
    <ligand>
        <name>[4Fe-4S] cluster</name>
        <dbReference type="ChEBI" id="CHEBI:49883"/>
        <label>2</label>
    </ligand>
</feature>
<feature type="binding site" evidence="1">
    <location>
        <position position="102"/>
    </location>
    <ligand>
        <name>[4Fe-4S] cluster</name>
        <dbReference type="ChEBI" id="CHEBI:49883"/>
        <label>2</label>
    </ligand>
</feature>
<feature type="binding site" evidence="1">
    <location>
        <position position="105"/>
    </location>
    <ligand>
        <name>[4Fe-4S] cluster</name>
        <dbReference type="ChEBI" id="CHEBI:49883"/>
        <label>2</label>
    </ligand>
</feature>
<feature type="binding site" evidence="1">
    <location>
        <position position="109"/>
    </location>
    <ligand>
        <name>[4Fe-4S] cluster</name>
        <dbReference type="ChEBI" id="CHEBI:49883"/>
        <label>1</label>
    </ligand>
</feature>
<accession>A1UD96</accession>